<name>RS5_ALLAM</name>
<comment type="function">
    <text evidence="1">With S4 and S12 plays an important role in translational accuracy.</text>
</comment>
<comment type="function">
    <text evidence="1">Located at the back of the 30S subunit body where it stabilizes the conformation of the head with respect to the body.</text>
</comment>
<comment type="subunit">
    <text evidence="1">Part of the 30S ribosomal subunit. Contacts proteins S4 and S8.</text>
</comment>
<comment type="domain">
    <text>The N-terminal domain interacts with the head of the 30S subunit; the C-terminal domain interacts with the body and contacts protein S4. The interaction surface between S4 and S5 is involved in control of translational fidelity.</text>
</comment>
<comment type="similarity">
    <text evidence="1">Belongs to the universal ribosomal protein uS5 family.</text>
</comment>
<accession>B9JVQ4</accession>
<feature type="chain" id="PRO_1000165438" description="Small ribosomal subunit protein uS5">
    <location>
        <begin position="1"/>
        <end position="189"/>
    </location>
</feature>
<feature type="domain" description="S5 DRBM" evidence="1">
    <location>
        <begin position="22"/>
        <end position="85"/>
    </location>
</feature>
<protein>
    <recommendedName>
        <fullName evidence="1">Small ribosomal subunit protein uS5</fullName>
    </recommendedName>
    <alternativeName>
        <fullName evidence="2">30S ribosomal protein S5</fullName>
    </alternativeName>
</protein>
<organism>
    <name type="scientific">Allorhizobium ampelinum (strain ATCC BAA-846 / DSM 112012 / S4)</name>
    <name type="common">Agrobacterium vitis (strain S4)</name>
    <dbReference type="NCBI Taxonomy" id="311402"/>
    <lineage>
        <taxon>Bacteria</taxon>
        <taxon>Pseudomonadati</taxon>
        <taxon>Pseudomonadota</taxon>
        <taxon>Alphaproteobacteria</taxon>
        <taxon>Hyphomicrobiales</taxon>
        <taxon>Rhizobiaceae</taxon>
        <taxon>Rhizobium/Agrobacterium group</taxon>
        <taxon>Allorhizobium</taxon>
        <taxon>Allorhizobium ampelinum</taxon>
    </lineage>
</organism>
<keyword id="KW-1185">Reference proteome</keyword>
<keyword id="KW-0687">Ribonucleoprotein</keyword>
<keyword id="KW-0689">Ribosomal protein</keyword>
<keyword id="KW-0694">RNA-binding</keyword>
<keyword id="KW-0699">rRNA-binding</keyword>
<dbReference type="EMBL" id="CP000633">
    <property type="protein sequence ID" value="ACM36334.1"/>
    <property type="molecule type" value="Genomic_DNA"/>
</dbReference>
<dbReference type="RefSeq" id="WP_015915755.1">
    <property type="nucleotide sequence ID" value="NC_011989.1"/>
</dbReference>
<dbReference type="SMR" id="B9JVQ4"/>
<dbReference type="STRING" id="311402.Avi_1859"/>
<dbReference type="GeneID" id="60682420"/>
<dbReference type="KEGG" id="avi:Avi_1859"/>
<dbReference type="eggNOG" id="COG0098">
    <property type="taxonomic scope" value="Bacteria"/>
</dbReference>
<dbReference type="HOGENOM" id="CLU_065898_2_2_5"/>
<dbReference type="Proteomes" id="UP000001596">
    <property type="component" value="Chromosome 1"/>
</dbReference>
<dbReference type="GO" id="GO:0015935">
    <property type="term" value="C:small ribosomal subunit"/>
    <property type="evidence" value="ECO:0007669"/>
    <property type="project" value="InterPro"/>
</dbReference>
<dbReference type="GO" id="GO:0019843">
    <property type="term" value="F:rRNA binding"/>
    <property type="evidence" value="ECO:0007669"/>
    <property type="project" value="UniProtKB-UniRule"/>
</dbReference>
<dbReference type="GO" id="GO:0003735">
    <property type="term" value="F:structural constituent of ribosome"/>
    <property type="evidence" value="ECO:0007669"/>
    <property type="project" value="InterPro"/>
</dbReference>
<dbReference type="GO" id="GO:0006412">
    <property type="term" value="P:translation"/>
    <property type="evidence" value="ECO:0007669"/>
    <property type="project" value="UniProtKB-UniRule"/>
</dbReference>
<dbReference type="FunFam" id="3.30.160.20:FF:000001">
    <property type="entry name" value="30S ribosomal protein S5"/>
    <property type="match status" value="1"/>
</dbReference>
<dbReference type="FunFam" id="3.30.230.10:FF:000002">
    <property type="entry name" value="30S ribosomal protein S5"/>
    <property type="match status" value="1"/>
</dbReference>
<dbReference type="Gene3D" id="3.30.160.20">
    <property type="match status" value="1"/>
</dbReference>
<dbReference type="Gene3D" id="3.30.230.10">
    <property type="match status" value="1"/>
</dbReference>
<dbReference type="HAMAP" id="MF_01307_B">
    <property type="entry name" value="Ribosomal_uS5_B"/>
    <property type="match status" value="1"/>
</dbReference>
<dbReference type="InterPro" id="IPR020568">
    <property type="entry name" value="Ribosomal_Su5_D2-typ_SF"/>
</dbReference>
<dbReference type="InterPro" id="IPR000851">
    <property type="entry name" value="Ribosomal_uS5"/>
</dbReference>
<dbReference type="InterPro" id="IPR005712">
    <property type="entry name" value="Ribosomal_uS5_bac-type"/>
</dbReference>
<dbReference type="InterPro" id="IPR005324">
    <property type="entry name" value="Ribosomal_uS5_C"/>
</dbReference>
<dbReference type="InterPro" id="IPR013810">
    <property type="entry name" value="Ribosomal_uS5_N"/>
</dbReference>
<dbReference type="InterPro" id="IPR018192">
    <property type="entry name" value="Ribosomal_uS5_N_CS"/>
</dbReference>
<dbReference type="InterPro" id="IPR014721">
    <property type="entry name" value="Ribsml_uS5_D2-typ_fold_subgr"/>
</dbReference>
<dbReference type="NCBIfam" id="TIGR01021">
    <property type="entry name" value="rpsE_bact"/>
    <property type="match status" value="1"/>
</dbReference>
<dbReference type="PANTHER" id="PTHR48277">
    <property type="entry name" value="MITOCHONDRIAL RIBOSOMAL PROTEIN S5"/>
    <property type="match status" value="1"/>
</dbReference>
<dbReference type="PANTHER" id="PTHR48277:SF1">
    <property type="entry name" value="MITOCHONDRIAL RIBOSOMAL PROTEIN S5"/>
    <property type="match status" value="1"/>
</dbReference>
<dbReference type="Pfam" id="PF00333">
    <property type="entry name" value="Ribosomal_S5"/>
    <property type="match status" value="1"/>
</dbReference>
<dbReference type="Pfam" id="PF03719">
    <property type="entry name" value="Ribosomal_S5_C"/>
    <property type="match status" value="1"/>
</dbReference>
<dbReference type="SUPFAM" id="SSF54768">
    <property type="entry name" value="dsRNA-binding domain-like"/>
    <property type="match status" value="1"/>
</dbReference>
<dbReference type="SUPFAM" id="SSF54211">
    <property type="entry name" value="Ribosomal protein S5 domain 2-like"/>
    <property type="match status" value="1"/>
</dbReference>
<dbReference type="PROSITE" id="PS00585">
    <property type="entry name" value="RIBOSOMAL_S5"/>
    <property type="match status" value="1"/>
</dbReference>
<dbReference type="PROSITE" id="PS50881">
    <property type="entry name" value="S5_DSRBD"/>
    <property type="match status" value="1"/>
</dbReference>
<reference key="1">
    <citation type="journal article" date="2009" name="J. Bacteriol.">
        <title>Genome sequences of three Agrobacterium biovars help elucidate the evolution of multichromosome genomes in bacteria.</title>
        <authorList>
            <person name="Slater S.C."/>
            <person name="Goldman B.S."/>
            <person name="Goodner B."/>
            <person name="Setubal J.C."/>
            <person name="Farrand S.K."/>
            <person name="Nester E.W."/>
            <person name="Burr T.J."/>
            <person name="Banta L."/>
            <person name="Dickerman A.W."/>
            <person name="Paulsen I."/>
            <person name="Otten L."/>
            <person name="Suen G."/>
            <person name="Welch R."/>
            <person name="Almeida N.F."/>
            <person name="Arnold F."/>
            <person name="Burton O.T."/>
            <person name="Du Z."/>
            <person name="Ewing A."/>
            <person name="Godsy E."/>
            <person name="Heisel S."/>
            <person name="Houmiel K.L."/>
            <person name="Jhaveri J."/>
            <person name="Lu J."/>
            <person name="Miller N.M."/>
            <person name="Norton S."/>
            <person name="Chen Q."/>
            <person name="Phoolcharoen W."/>
            <person name="Ohlin V."/>
            <person name="Ondrusek D."/>
            <person name="Pride N."/>
            <person name="Stricklin S.L."/>
            <person name="Sun J."/>
            <person name="Wheeler C."/>
            <person name="Wilson L."/>
            <person name="Zhu H."/>
            <person name="Wood D.W."/>
        </authorList>
    </citation>
    <scope>NUCLEOTIDE SEQUENCE [LARGE SCALE GENOMIC DNA]</scope>
    <source>
        <strain>ATCC BAA-846 / DSM 112012 / S4</strain>
    </source>
</reference>
<sequence>MAQEKRGSRDDRQNREERDSEFVDKLVAINRVAKVVKGGRRFGFAALVVVGDQKGRVGFGHGKAREVPEAIRKATESAKRDLIFVPLRDGRTLHHDVHGRHGAGKVLLRSAKAGTGIIAGGPMRAVFETLGMHDVVAKSTGSSNPYNMVRATFDALKHQVHPKDVAAQRGLKYATLQARRAASGNGSEE</sequence>
<proteinExistence type="inferred from homology"/>
<gene>
    <name evidence="1" type="primary">rpsE</name>
    <name type="ordered locus">Avi_1859</name>
</gene>
<evidence type="ECO:0000255" key="1">
    <source>
        <dbReference type="HAMAP-Rule" id="MF_01307"/>
    </source>
</evidence>
<evidence type="ECO:0000305" key="2"/>